<name>Y837_STRP2</name>
<gene>
    <name type="ordered locus">SPD_0837</name>
</gene>
<evidence type="ECO:0000255" key="1">
    <source>
        <dbReference type="HAMAP-Rule" id="MF_01538"/>
    </source>
</evidence>
<organism>
    <name type="scientific">Streptococcus pneumoniae serotype 2 (strain D39 / NCTC 7466)</name>
    <dbReference type="NCBI Taxonomy" id="373153"/>
    <lineage>
        <taxon>Bacteria</taxon>
        <taxon>Bacillati</taxon>
        <taxon>Bacillota</taxon>
        <taxon>Bacilli</taxon>
        <taxon>Lactobacillales</taxon>
        <taxon>Streptococcaceae</taxon>
        <taxon>Streptococcus</taxon>
    </lineage>
</organism>
<proteinExistence type="inferred from homology"/>
<reference key="1">
    <citation type="journal article" date="2007" name="J. Bacteriol.">
        <title>Genome sequence of Avery's virulent serotype 2 strain D39 of Streptococcus pneumoniae and comparison with that of unencapsulated laboratory strain R6.</title>
        <authorList>
            <person name="Lanie J.A."/>
            <person name="Ng W.-L."/>
            <person name="Kazmierczak K.M."/>
            <person name="Andrzejewski T.M."/>
            <person name="Davidsen T.M."/>
            <person name="Wayne K.J."/>
            <person name="Tettelin H."/>
            <person name="Glass J.I."/>
            <person name="Winkler M.E."/>
        </authorList>
    </citation>
    <scope>NUCLEOTIDE SEQUENCE [LARGE SCALE GENOMIC DNA]</scope>
    <source>
        <strain>D39 / NCTC 7466</strain>
    </source>
</reference>
<feature type="chain" id="PRO_0000298754" description="UPF0346 protein SPD_0837">
    <location>
        <begin position="1"/>
        <end position="71"/>
    </location>
</feature>
<keyword id="KW-1185">Reference proteome</keyword>
<comment type="similarity">
    <text evidence="1">Belongs to the UPF0346 family.</text>
</comment>
<sequence length="71" mass="8435">MRKSFYTWLMTERNPKSNSPKAILADLAFEEAAFPKHTDDFDEVSRFLEEHASFSFNLGDFDSIWQEYLEH</sequence>
<accession>Q04KX8</accession>
<dbReference type="EMBL" id="CP000410">
    <property type="protein sequence ID" value="ABJ55364.1"/>
    <property type="molecule type" value="Genomic_DNA"/>
</dbReference>
<dbReference type="RefSeq" id="WP_001232082.1">
    <property type="nucleotide sequence ID" value="NZ_JAMLJR010000004.1"/>
</dbReference>
<dbReference type="SMR" id="Q04KX8"/>
<dbReference type="PaxDb" id="373153-SPD_0837"/>
<dbReference type="KEGG" id="spd:SPD_0837"/>
<dbReference type="eggNOG" id="COG4479">
    <property type="taxonomic scope" value="Bacteria"/>
</dbReference>
<dbReference type="HOGENOM" id="CLU_177534_1_0_9"/>
<dbReference type="BioCyc" id="SPNE373153:G1G6V-916-MONOMER"/>
<dbReference type="Proteomes" id="UP000001452">
    <property type="component" value="Chromosome"/>
</dbReference>
<dbReference type="Gene3D" id="1.10.150.260">
    <property type="entry name" value="YozE SAM-like"/>
    <property type="match status" value="1"/>
</dbReference>
<dbReference type="HAMAP" id="MF_01538">
    <property type="entry name" value="UPF0346"/>
    <property type="match status" value="1"/>
</dbReference>
<dbReference type="InterPro" id="IPR010673">
    <property type="entry name" value="UPF0346"/>
</dbReference>
<dbReference type="InterPro" id="IPR023089">
    <property type="entry name" value="YozE_SAM-like"/>
</dbReference>
<dbReference type="InterPro" id="IPR036806">
    <property type="entry name" value="YozE_SAM-like_sf"/>
</dbReference>
<dbReference type="NCBIfam" id="NF010193">
    <property type="entry name" value="PRK13672.1"/>
    <property type="match status" value="1"/>
</dbReference>
<dbReference type="Pfam" id="PF06855">
    <property type="entry name" value="YozE_SAM_like"/>
    <property type="match status" value="1"/>
</dbReference>
<dbReference type="PIRSF" id="PIRSF037262">
    <property type="entry name" value="UCP037262"/>
    <property type="match status" value="1"/>
</dbReference>
<dbReference type="SUPFAM" id="SSF140652">
    <property type="entry name" value="YozE-like"/>
    <property type="match status" value="1"/>
</dbReference>
<protein>
    <recommendedName>
        <fullName evidence="1">UPF0346 protein SPD_0837</fullName>
    </recommendedName>
</protein>